<protein>
    <recommendedName>
        <fullName evidence="5">Cytoskeleton protein RodZ</fullName>
    </recommendedName>
</protein>
<organism>
    <name type="scientific">Streptococcus pneumoniae (strain ATCC BAA-255 / R6)</name>
    <dbReference type="NCBI Taxonomy" id="171101"/>
    <lineage>
        <taxon>Bacteria</taxon>
        <taxon>Bacillati</taxon>
        <taxon>Bacillota</taxon>
        <taxon>Bacilli</taxon>
        <taxon>Lactobacillales</taxon>
        <taxon>Streptococcaceae</taxon>
        <taxon>Streptococcus</taxon>
    </lineage>
</organism>
<dbReference type="EMBL" id="AE007317">
    <property type="protein sequence ID" value="AAL00830.1"/>
    <property type="molecule type" value="Genomic_DNA"/>
</dbReference>
<dbReference type="PIR" id="A99525">
    <property type="entry name" value="A99525"/>
</dbReference>
<dbReference type="PIR" id="F95259">
    <property type="entry name" value="F95259"/>
</dbReference>
<dbReference type="RefSeq" id="NP_359619.1">
    <property type="nucleotide sequence ID" value="NC_003098.1"/>
</dbReference>
<dbReference type="SMR" id="Q8DMX7"/>
<dbReference type="STRING" id="171101.spr2028"/>
<dbReference type="KEGG" id="spr:spr2028"/>
<dbReference type="PATRIC" id="fig|171101.6.peg.2194"/>
<dbReference type="eggNOG" id="COG1426">
    <property type="taxonomic scope" value="Bacteria"/>
</dbReference>
<dbReference type="HOGENOM" id="CLU_047530_0_2_9"/>
<dbReference type="PHI-base" id="PHI:3158"/>
<dbReference type="Proteomes" id="UP000000586">
    <property type="component" value="Chromosome"/>
</dbReference>
<dbReference type="GO" id="GO:0005886">
    <property type="term" value="C:plasma membrane"/>
    <property type="evidence" value="ECO:0000318"/>
    <property type="project" value="GO_Central"/>
</dbReference>
<dbReference type="GO" id="GO:0003677">
    <property type="term" value="F:DNA binding"/>
    <property type="evidence" value="ECO:0007669"/>
    <property type="project" value="InterPro"/>
</dbReference>
<dbReference type="GO" id="GO:0008360">
    <property type="term" value="P:regulation of cell shape"/>
    <property type="evidence" value="ECO:0007669"/>
    <property type="project" value="UniProtKB-KW"/>
</dbReference>
<dbReference type="Gene3D" id="1.10.260.40">
    <property type="entry name" value="lambda repressor-like DNA-binding domains"/>
    <property type="match status" value="1"/>
</dbReference>
<dbReference type="InterPro" id="IPR050400">
    <property type="entry name" value="Bact_Cytoskel_RodZ"/>
</dbReference>
<dbReference type="InterPro" id="IPR010982">
    <property type="entry name" value="Lambda_DNA-bd_dom_sf"/>
</dbReference>
<dbReference type="InterPro" id="IPR048211">
    <property type="entry name" value="RodZ-like"/>
</dbReference>
<dbReference type="InterPro" id="IPR025194">
    <property type="entry name" value="RodZ-like_C"/>
</dbReference>
<dbReference type="NCBIfam" id="NF041534">
    <property type="entry name" value="rodZ_Strepcoccus"/>
    <property type="match status" value="1"/>
</dbReference>
<dbReference type="PANTHER" id="PTHR34475">
    <property type="match status" value="1"/>
</dbReference>
<dbReference type="PANTHER" id="PTHR34475:SF1">
    <property type="entry name" value="CYTOSKELETON PROTEIN RODZ"/>
    <property type="match status" value="1"/>
</dbReference>
<dbReference type="Pfam" id="PF13413">
    <property type="entry name" value="HTH_25"/>
    <property type="match status" value="1"/>
</dbReference>
<dbReference type="Pfam" id="PF13464">
    <property type="entry name" value="RodZ_C"/>
    <property type="match status" value="1"/>
</dbReference>
<dbReference type="SUPFAM" id="SSF47413">
    <property type="entry name" value="lambda repressor-like DNA-binding domains"/>
    <property type="match status" value="1"/>
</dbReference>
<feature type="chain" id="PRO_0000454550" description="Cytoskeleton protein RodZ">
    <location>
        <begin position="1"/>
        <end position="276"/>
    </location>
</feature>
<feature type="topological domain" description="Cytoplasmic" evidence="7">
    <location>
        <begin position="1"/>
        <end position="110"/>
    </location>
</feature>
<feature type="transmembrane region" description="Helical; Signal-anchor for type II membrane protein" evidence="2">
    <location>
        <begin position="111"/>
        <end position="131"/>
    </location>
</feature>
<feature type="topological domain" description="Extracellular" evidence="7">
    <location>
        <begin position="132"/>
        <end position="276"/>
    </location>
</feature>
<sequence length="276" mass="30551">MTSMRKKTIGEVLRLARINQGLSLDELQKKTEIQLDMLEAMEADDFDQLPSPFYTRSFLKKYAWAVELDDQIVLDAYDSGSMITYEEVDVDEDELTGRRRSSKKKKKKTSFLPLFYFILFALSILIFVTYYVWNYIQTQPEEPSLSNYSVVQSTSSTSSVPHSSSSSSSSIESAISVSGEGNHVEIAYKTSKETVKLQLAVSDVTSWVSVSESELEGGVTLSPKKKSAEATVATKSPVTITLGVVKGVDLTVDNQTVDLSKLTAQTGQITVTFTKN</sequence>
<reference key="1">
    <citation type="journal article" date="2001" name="J. Bacteriol.">
        <title>Genome of the bacterium Streptococcus pneumoniae strain R6.</title>
        <authorList>
            <person name="Hoskins J."/>
            <person name="Alborn W.E. Jr."/>
            <person name="Arnold J."/>
            <person name="Blaszczak L.C."/>
            <person name="Burgett S."/>
            <person name="DeHoff B.S."/>
            <person name="Estrem S.T."/>
            <person name="Fritz L."/>
            <person name="Fu D.-J."/>
            <person name="Fuller W."/>
            <person name="Geringer C."/>
            <person name="Gilmour R."/>
            <person name="Glass J.S."/>
            <person name="Khoja H."/>
            <person name="Kraft A.R."/>
            <person name="Lagace R.E."/>
            <person name="LeBlanc D.J."/>
            <person name="Lee L.N."/>
            <person name="Lefkowitz E.J."/>
            <person name="Lu J."/>
            <person name="Matsushima P."/>
            <person name="McAhren S.M."/>
            <person name="McHenney M."/>
            <person name="McLeaster K."/>
            <person name="Mundy C.W."/>
            <person name="Nicas T.I."/>
            <person name="Norris F.H."/>
            <person name="O'Gara M."/>
            <person name="Peery R.B."/>
            <person name="Robertson G.T."/>
            <person name="Rockey P."/>
            <person name="Sun P.-M."/>
            <person name="Winkler M.E."/>
            <person name="Yang Y."/>
            <person name="Young-Bellido M."/>
            <person name="Zhao G."/>
            <person name="Zook C.A."/>
            <person name="Baltz R.H."/>
            <person name="Jaskunas S.R."/>
            <person name="Rosteck P.R. Jr."/>
            <person name="Skatrud P.L."/>
            <person name="Glass J.I."/>
        </authorList>
    </citation>
    <scope>NUCLEOTIDE SEQUENCE [LARGE SCALE GENOMIC DNA]</scope>
    <source>
        <strain>ATCC BAA-255 / R6</strain>
    </source>
</reference>
<reference key="2">
    <citation type="journal article" date="2017" name="Mol. Microbiol.">
        <title>Identification of EloR (Spr1851) as a regulator of cell elongation in Streptococcus pneumoniae.</title>
        <authorList>
            <person name="Stamsaas G.A."/>
            <person name="Straume D."/>
            <person name="Ruud Winther A."/>
            <person name="Kjos M."/>
            <person name="Frantzen C.A."/>
            <person name="Haavarstein L.S."/>
        </authorList>
    </citation>
    <scope>FUNCTION</scope>
    <scope>SUBUNIT</scope>
    <scope>DISRUPTION PHENOTYPE</scope>
    <scope>TOPOLOGY</scope>
    <source>
        <strain>R6 / R704</strain>
    </source>
</reference>
<reference key="3">
    <citation type="journal article" date="2021" name="J. Bacteriol.">
        <title>EloR interacts with the lytic transglycosylase MltG at midcell in Streptococcus pneumoniae R6.</title>
        <authorList>
            <person name="Winther A.R."/>
            <person name="Kjos M."/>
            <person name="Herigstad M.L."/>
            <person name="Haavarstein L.S."/>
            <person name="Straume D."/>
        </authorList>
    </citation>
    <scope>FUNCTION</scope>
    <scope>INTERACTION WITH KHPB</scope>
    <scope>DISRUPTION PHENOTYPE</scope>
    <source>
        <strain>R6 / R704</strain>
    </source>
</reference>
<comment type="function">
    <text evidence="1 7 8">Cytoskeletal protein that is involved in cell-shape control through regulation of the length of the long axis (By similarity). Probably part of the elongasome which synthesizes peripheral peptidoglycan (Probable).</text>
</comment>
<comment type="subunit">
    <text evidence="3 4">Interacts with MltG and MreC in the elongasome (PubMed:28710862). Interacts with KhpB (also called EloR/Jag) (PubMed:33558392).</text>
</comment>
<comment type="subcellular location">
    <subcellularLocation>
        <location evidence="6">Cell membrane</location>
        <topology evidence="2">Single-pass membrane protein</topology>
    </subcellularLocation>
</comment>
<comment type="disruption phenotype">
    <text evidence="3 4">Cells are smaller. Deletion suppresses activating mutations in khpB (also called eloR/jag) (PubMed:28710862). No change in subcellular location of KhpB (PubMed:33558392).</text>
</comment>
<comment type="similarity">
    <text evidence="6">Belongs to the RodZ family.</text>
</comment>
<keyword id="KW-1003">Cell membrane</keyword>
<keyword id="KW-0133">Cell shape</keyword>
<keyword id="KW-0472">Membrane</keyword>
<keyword id="KW-1185">Reference proteome</keyword>
<keyword id="KW-0735">Signal-anchor</keyword>
<keyword id="KW-0812">Transmembrane</keyword>
<keyword id="KW-1133">Transmembrane helix</keyword>
<proteinExistence type="evidence at protein level"/>
<evidence type="ECO:0000250" key="1">
    <source>
        <dbReference type="UniProtKB" id="P27434"/>
    </source>
</evidence>
<evidence type="ECO:0000255" key="2"/>
<evidence type="ECO:0000269" key="3">
    <source>
    </source>
</evidence>
<evidence type="ECO:0000269" key="4">
    <source>
    </source>
</evidence>
<evidence type="ECO:0000303" key="5">
    <source>
    </source>
</evidence>
<evidence type="ECO:0000305" key="6"/>
<evidence type="ECO:0000305" key="7">
    <source>
    </source>
</evidence>
<evidence type="ECO:0000305" key="8">
    <source>
    </source>
</evidence>
<name>RODZ_STRR6</name>
<gene>
    <name evidence="5" type="primary">rodZ</name>
    <name type="ordered locus">spr2028</name>
</gene>
<accession>Q8DMX7</accession>